<comment type="function">
    <text evidence="1">IGPS catalyzes the conversion of PRFAR and glutamine to IGP, AICAR and glutamate. The HisH subunit catalyzes the hydrolysis of glutamine to glutamate and ammonia as part of the synthesis of IGP and AICAR. The resulting ammonia molecule is channeled to the active site of HisF.</text>
</comment>
<comment type="catalytic activity">
    <reaction evidence="1">
        <text>5-[(5-phospho-1-deoxy-D-ribulos-1-ylimino)methylamino]-1-(5-phospho-beta-D-ribosyl)imidazole-4-carboxamide + L-glutamine = D-erythro-1-(imidazol-4-yl)glycerol 3-phosphate + 5-amino-1-(5-phospho-beta-D-ribosyl)imidazole-4-carboxamide + L-glutamate + H(+)</text>
        <dbReference type="Rhea" id="RHEA:24793"/>
        <dbReference type="ChEBI" id="CHEBI:15378"/>
        <dbReference type="ChEBI" id="CHEBI:29985"/>
        <dbReference type="ChEBI" id="CHEBI:58278"/>
        <dbReference type="ChEBI" id="CHEBI:58359"/>
        <dbReference type="ChEBI" id="CHEBI:58475"/>
        <dbReference type="ChEBI" id="CHEBI:58525"/>
        <dbReference type="EC" id="4.3.2.10"/>
    </reaction>
</comment>
<comment type="catalytic activity">
    <reaction evidence="1">
        <text>L-glutamine + H2O = L-glutamate + NH4(+)</text>
        <dbReference type="Rhea" id="RHEA:15889"/>
        <dbReference type="ChEBI" id="CHEBI:15377"/>
        <dbReference type="ChEBI" id="CHEBI:28938"/>
        <dbReference type="ChEBI" id="CHEBI:29985"/>
        <dbReference type="ChEBI" id="CHEBI:58359"/>
        <dbReference type="EC" id="3.5.1.2"/>
    </reaction>
</comment>
<comment type="pathway">
    <text evidence="1">Amino-acid biosynthesis; L-histidine biosynthesis; L-histidine from 5-phospho-alpha-D-ribose 1-diphosphate: step 5/9.</text>
</comment>
<comment type="subunit">
    <text evidence="1">Heterodimer of HisH and HisF.</text>
</comment>
<comment type="subcellular location">
    <subcellularLocation>
        <location evidence="1">Cytoplasm</location>
    </subcellularLocation>
</comment>
<feature type="chain" id="PRO_0000231705" description="Imidazole glycerol phosphate synthase subunit HisH">
    <location>
        <begin position="1"/>
        <end position="196"/>
    </location>
</feature>
<feature type="domain" description="Glutamine amidotransferase type-1" evidence="1">
    <location>
        <begin position="2"/>
        <end position="196"/>
    </location>
</feature>
<feature type="active site" description="Nucleophile" evidence="1">
    <location>
        <position position="77"/>
    </location>
</feature>
<feature type="active site" evidence="1">
    <location>
        <position position="178"/>
    </location>
</feature>
<feature type="active site" evidence="1">
    <location>
        <position position="180"/>
    </location>
</feature>
<keyword id="KW-0028">Amino-acid biosynthesis</keyword>
<keyword id="KW-0963">Cytoplasm</keyword>
<keyword id="KW-0315">Glutamine amidotransferase</keyword>
<keyword id="KW-0368">Histidine biosynthesis</keyword>
<keyword id="KW-0378">Hydrolase</keyword>
<keyword id="KW-0456">Lyase</keyword>
<gene>
    <name evidence="1" type="primary">hisH</name>
    <name type="ordered locus">BF2891</name>
</gene>
<proteinExistence type="inferred from homology"/>
<accession>Q5LBD5</accession>
<name>HIS5_BACFN</name>
<reference key="1">
    <citation type="journal article" date="2005" name="Science">
        <title>Extensive DNA inversions in the B. fragilis genome control variable gene expression.</title>
        <authorList>
            <person name="Cerdeno-Tarraga A.-M."/>
            <person name="Patrick S."/>
            <person name="Crossman L.C."/>
            <person name="Blakely G."/>
            <person name="Abratt V."/>
            <person name="Lennard N."/>
            <person name="Poxton I."/>
            <person name="Duerden B."/>
            <person name="Harris B."/>
            <person name="Quail M.A."/>
            <person name="Barron A."/>
            <person name="Clark L."/>
            <person name="Corton C."/>
            <person name="Doggett J."/>
            <person name="Holden M.T.G."/>
            <person name="Larke N."/>
            <person name="Line A."/>
            <person name="Lord A."/>
            <person name="Norbertczak H."/>
            <person name="Ormond D."/>
            <person name="Price C."/>
            <person name="Rabbinowitsch E."/>
            <person name="Woodward J."/>
            <person name="Barrell B.G."/>
            <person name="Parkhill J."/>
        </authorList>
    </citation>
    <scope>NUCLEOTIDE SEQUENCE [LARGE SCALE GENOMIC DNA]</scope>
    <source>
        <strain>ATCC 25285 / DSM 2151 / CCUG 4856 / JCM 11019 / LMG 10263 / NCTC 9343 / Onslow / VPI 2553 / EN-2</strain>
    </source>
</reference>
<dbReference type="EC" id="4.3.2.10" evidence="1"/>
<dbReference type="EC" id="3.5.1.2" evidence="1"/>
<dbReference type="EMBL" id="CR626927">
    <property type="protein sequence ID" value="CAH08585.1"/>
    <property type="molecule type" value="Genomic_DNA"/>
</dbReference>
<dbReference type="RefSeq" id="WP_010993172.1">
    <property type="nucleotide sequence ID" value="NZ_UFTH01000001.1"/>
</dbReference>
<dbReference type="SMR" id="Q5LBD5"/>
<dbReference type="MEROPS" id="C26.965"/>
<dbReference type="PaxDb" id="272559-BF9343_2804"/>
<dbReference type="GeneID" id="60366976"/>
<dbReference type="KEGG" id="bfs:BF9343_2804"/>
<dbReference type="eggNOG" id="COG0118">
    <property type="taxonomic scope" value="Bacteria"/>
</dbReference>
<dbReference type="HOGENOM" id="CLU_071837_0_0_10"/>
<dbReference type="UniPathway" id="UPA00031">
    <property type="reaction ID" value="UER00010"/>
</dbReference>
<dbReference type="Proteomes" id="UP000006731">
    <property type="component" value="Chromosome"/>
</dbReference>
<dbReference type="GO" id="GO:0005737">
    <property type="term" value="C:cytoplasm"/>
    <property type="evidence" value="ECO:0007669"/>
    <property type="project" value="UniProtKB-SubCell"/>
</dbReference>
<dbReference type="GO" id="GO:0004359">
    <property type="term" value="F:glutaminase activity"/>
    <property type="evidence" value="ECO:0007669"/>
    <property type="project" value="UniProtKB-EC"/>
</dbReference>
<dbReference type="GO" id="GO:0000107">
    <property type="term" value="F:imidazoleglycerol-phosphate synthase activity"/>
    <property type="evidence" value="ECO:0007669"/>
    <property type="project" value="UniProtKB-UniRule"/>
</dbReference>
<dbReference type="GO" id="GO:0016829">
    <property type="term" value="F:lyase activity"/>
    <property type="evidence" value="ECO:0007669"/>
    <property type="project" value="UniProtKB-KW"/>
</dbReference>
<dbReference type="GO" id="GO:0000105">
    <property type="term" value="P:L-histidine biosynthetic process"/>
    <property type="evidence" value="ECO:0007669"/>
    <property type="project" value="UniProtKB-UniRule"/>
</dbReference>
<dbReference type="CDD" id="cd01748">
    <property type="entry name" value="GATase1_IGP_Synthase"/>
    <property type="match status" value="1"/>
</dbReference>
<dbReference type="FunFam" id="3.40.50.880:FF:000009">
    <property type="entry name" value="Imidazole glycerol phosphate synthase subunit HisH"/>
    <property type="match status" value="1"/>
</dbReference>
<dbReference type="Gene3D" id="3.40.50.880">
    <property type="match status" value="1"/>
</dbReference>
<dbReference type="HAMAP" id="MF_00278">
    <property type="entry name" value="HisH"/>
    <property type="match status" value="1"/>
</dbReference>
<dbReference type="InterPro" id="IPR029062">
    <property type="entry name" value="Class_I_gatase-like"/>
</dbReference>
<dbReference type="InterPro" id="IPR017926">
    <property type="entry name" value="GATASE"/>
</dbReference>
<dbReference type="InterPro" id="IPR010139">
    <property type="entry name" value="Imidazole-glycPsynth_HisH"/>
</dbReference>
<dbReference type="NCBIfam" id="TIGR01855">
    <property type="entry name" value="IMP_synth_hisH"/>
    <property type="match status" value="1"/>
</dbReference>
<dbReference type="PANTHER" id="PTHR42701">
    <property type="entry name" value="IMIDAZOLE GLYCEROL PHOSPHATE SYNTHASE SUBUNIT HISH"/>
    <property type="match status" value="1"/>
</dbReference>
<dbReference type="PANTHER" id="PTHR42701:SF1">
    <property type="entry name" value="IMIDAZOLE GLYCEROL PHOSPHATE SYNTHASE SUBUNIT HISH"/>
    <property type="match status" value="1"/>
</dbReference>
<dbReference type="Pfam" id="PF00117">
    <property type="entry name" value="GATase"/>
    <property type="match status" value="1"/>
</dbReference>
<dbReference type="PIRSF" id="PIRSF000495">
    <property type="entry name" value="Amidotransf_hisH"/>
    <property type="match status" value="1"/>
</dbReference>
<dbReference type="SUPFAM" id="SSF52317">
    <property type="entry name" value="Class I glutamine amidotransferase-like"/>
    <property type="match status" value="1"/>
</dbReference>
<dbReference type="PROSITE" id="PS51273">
    <property type="entry name" value="GATASE_TYPE_1"/>
    <property type="match status" value="1"/>
</dbReference>
<evidence type="ECO:0000255" key="1">
    <source>
        <dbReference type="HAMAP-Rule" id="MF_00278"/>
    </source>
</evidence>
<sequence>MKVAVIKYNAGNIRSVDYALKRLGVEAVVTSDKEVLKAADKVIFPGVGEAETTMLHLKESGMDHFIKELRQPVLGICLGMQLMCRFSEEGNVDCLGIFDTDVKRFAPRKHEEKVPHMGWNTISCLKSDLFKGFTRDEFVYFVHSYYVPVSEFTAAETDYIRPFSAALHKDNFYATQFHPEKSGEAGERIIKNFLEL</sequence>
<organism>
    <name type="scientific">Bacteroides fragilis (strain ATCC 25285 / DSM 2151 / CCUG 4856 / JCM 11019 / LMG 10263 / NCTC 9343 / Onslow / VPI 2553 / EN-2)</name>
    <dbReference type="NCBI Taxonomy" id="272559"/>
    <lineage>
        <taxon>Bacteria</taxon>
        <taxon>Pseudomonadati</taxon>
        <taxon>Bacteroidota</taxon>
        <taxon>Bacteroidia</taxon>
        <taxon>Bacteroidales</taxon>
        <taxon>Bacteroidaceae</taxon>
        <taxon>Bacteroides</taxon>
    </lineage>
</organism>
<protein>
    <recommendedName>
        <fullName evidence="1">Imidazole glycerol phosphate synthase subunit HisH</fullName>
        <ecNumber evidence="1">4.3.2.10</ecNumber>
    </recommendedName>
    <alternativeName>
        <fullName evidence="1">IGP synthase glutaminase subunit</fullName>
        <ecNumber evidence="1">3.5.1.2</ecNumber>
    </alternativeName>
    <alternativeName>
        <fullName evidence="1">IGP synthase subunit HisH</fullName>
    </alternativeName>
    <alternativeName>
        <fullName evidence="1">ImGP synthase subunit HisH</fullName>
        <shortName evidence="1">IGPS subunit HisH</shortName>
    </alternativeName>
</protein>